<feature type="chain" id="PRO_0000413320" description="Glutamyl-tRNA(Gln) amidotransferase subunit C, chloroplastic/mitochondrial">
    <location>
        <begin position="1"/>
        <end position="181"/>
    </location>
</feature>
<accession>A9P2J1</accession>
<sequence length="181" mass="20336">MIFLGPVLLTRGALSFFLTAGGSSVYRAWSWWLSGIHLFMAFSMSTSSLYKVGFGFVCTKSPCLRVSLISRSQPWRFYSVHNNFEAPDVVQLAAKARISLTPKEVEDYGPKIGQVIDWFGQLQGVNLENVEPAIRADTDKLSNLRPDEPIIYEDREEMIAGVPTLEEPFIKVPKILKSSME</sequence>
<evidence type="ECO:0000255" key="1">
    <source>
        <dbReference type="HAMAP-Rule" id="MF_03149"/>
    </source>
</evidence>
<keyword id="KW-0067">ATP-binding</keyword>
<keyword id="KW-0150">Chloroplast</keyword>
<keyword id="KW-0436">Ligase</keyword>
<keyword id="KW-0496">Mitochondrion</keyword>
<keyword id="KW-0547">Nucleotide-binding</keyword>
<keyword id="KW-0934">Plastid</keyword>
<keyword id="KW-0648">Protein biosynthesis</keyword>
<reference key="1">
    <citation type="journal article" date="2008" name="BMC Genomics">
        <title>A conifer genomics resource of 200,000 spruce (Picea spp.) ESTs and 6,464 high-quality, sequence-finished full-length cDNAs for Sitka spruce (Picea sitchensis).</title>
        <authorList>
            <person name="Ralph S.G."/>
            <person name="Chun H.J.E."/>
            <person name="Kolosova N."/>
            <person name="Cooper D."/>
            <person name="Oddy C."/>
            <person name="Ritland C.E."/>
            <person name="Kirkpatrick R."/>
            <person name="Moore R."/>
            <person name="Barber S."/>
            <person name="Holt R.A."/>
            <person name="Jones S.J.M."/>
            <person name="Marra M.A."/>
            <person name="Douglas C.J."/>
            <person name="Ritland K."/>
            <person name="Bohlmann J."/>
        </authorList>
    </citation>
    <scope>NUCLEOTIDE SEQUENCE [LARGE SCALE MRNA]</scope>
    <source>
        <tissue>Bark</tissue>
    </source>
</reference>
<dbReference type="EC" id="6.3.5.-" evidence="1"/>
<dbReference type="EMBL" id="EF087870">
    <property type="protein sequence ID" value="ABK27102.1"/>
    <property type="molecule type" value="mRNA"/>
</dbReference>
<dbReference type="SMR" id="A9P2J1"/>
<dbReference type="OMA" id="RSQPWRF"/>
<dbReference type="GO" id="GO:0009507">
    <property type="term" value="C:chloroplast"/>
    <property type="evidence" value="ECO:0007669"/>
    <property type="project" value="UniProtKB-SubCell"/>
</dbReference>
<dbReference type="GO" id="GO:0030956">
    <property type="term" value="C:glutamyl-tRNA(Gln) amidotransferase complex"/>
    <property type="evidence" value="ECO:0007669"/>
    <property type="project" value="UniProtKB-UniRule"/>
</dbReference>
<dbReference type="GO" id="GO:0005739">
    <property type="term" value="C:mitochondrion"/>
    <property type="evidence" value="ECO:0007669"/>
    <property type="project" value="UniProtKB-SubCell"/>
</dbReference>
<dbReference type="GO" id="GO:0005524">
    <property type="term" value="F:ATP binding"/>
    <property type="evidence" value="ECO:0007669"/>
    <property type="project" value="UniProtKB-KW"/>
</dbReference>
<dbReference type="GO" id="GO:0050567">
    <property type="term" value="F:glutaminyl-tRNA synthase (glutamine-hydrolyzing) activity"/>
    <property type="evidence" value="ECO:0007669"/>
    <property type="project" value="UniProtKB-UniRule"/>
</dbReference>
<dbReference type="GO" id="GO:0070681">
    <property type="term" value="P:glutaminyl-tRNAGln biosynthesis via transamidation"/>
    <property type="evidence" value="ECO:0007669"/>
    <property type="project" value="UniProtKB-UniRule"/>
</dbReference>
<dbReference type="GO" id="GO:0032543">
    <property type="term" value="P:mitochondrial translation"/>
    <property type="evidence" value="ECO:0007669"/>
    <property type="project" value="UniProtKB-UniRule"/>
</dbReference>
<dbReference type="GO" id="GO:0006450">
    <property type="term" value="P:regulation of translational fidelity"/>
    <property type="evidence" value="ECO:0007669"/>
    <property type="project" value="InterPro"/>
</dbReference>
<dbReference type="Gene3D" id="1.10.20.60">
    <property type="entry name" value="Glu-tRNAGln amidotransferase C subunit, N-terminal domain"/>
    <property type="match status" value="1"/>
</dbReference>
<dbReference type="HAMAP" id="MF_00122">
    <property type="entry name" value="GatC"/>
    <property type="match status" value="1"/>
</dbReference>
<dbReference type="InterPro" id="IPR036113">
    <property type="entry name" value="Asp/Glu-ADT_sf_sub_c"/>
</dbReference>
<dbReference type="InterPro" id="IPR003837">
    <property type="entry name" value="GatC"/>
</dbReference>
<dbReference type="NCBIfam" id="TIGR00135">
    <property type="entry name" value="gatC"/>
    <property type="match status" value="1"/>
</dbReference>
<dbReference type="PANTHER" id="PTHR15004">
    <property type="entry name" value="GLUTAMYL-TRNA(GLN) AMIDOTRANSFERASE SUBUNIT C, MITOCHONDRIAL"/>
    <property type="match status" value="1"/>
</dbReference>
<dbReference type="PANTHER" id="PTHR15004:SF0">
    <property type="entry name" value="GLUTAMYL-TRNA(GLN) AMIDOTRANSFERASE SUBUNIT C, MITOCHONDRIAL"/>
    <property type="match status" value="1"/>
</dbReference>
<dbReference type="Pfam" id="PF02686">
    <property type="entry name" value="GatC"/>
    <property type="match status" value="1"/>
</dbReference>
<dbReference type="SUPFAM" id="SSF141000">
    <property type="entry name" value="Glu-tRNAGln amidotransferase C subunit"/>
    <property type="match status" value="1"/>
</dbReference>
<organism>
    <name type="scientific">Picea sitchensis</name>
    <name type="common">Sitka spruce</name>
    <name type="synonym">Pinus sitchensis</name>
    <dbReference type="NCBI Taxonomy" id="3332"/>
    <lineage>
        <taxon>Eukaryota</taxon>
        <taxon>Viridiplantae</taxon>
        <taxon>Streptophyta</taxon>
        <taxon>Embryophyta</taxon>
        <taxon>Tracheophyta</taxon>
        <taxon>Spermatophyta</taxon>
        <taxon>Pinopsida</taxon>
        <taxon>Pinidae</taxon>
        <taxon>Conifers I</taxon>
        <taxon>Pinales</taxon>
        <taxon>Pinaceae</taxon>
        <taxon>Picea</taxon>
    </lineage>
</organism>
<name>GATC_PICSI</name>
<protein>
    <recommendedName>
        <fullName evidence="1">Glutamyl-tRNA(Gln) amidotransferase subunit C, chloroplastic/mitochondrial</fullName>
        <shortName evidence="1">Glu-AdT subunit C</shortName>
        <ecNumber evidence="1">6.3.5.-</ecNumber>
    </recommendedName>
</protein>
<proteinExistence type="evidence at transcript level"/>
<comment type="function">
    <text evidence="1">Allows the formation of correctly charged Gln-tRNA(Gln) through the transamidation of misacylated Glu-tRNA(Gln) in chloroplasts and mitochondria. The reaction takes place in the presence of glutamine and ATP through an activated gamma-phospho-Glu-tRNA(Gln).</text>
</comment>
<comment type="catalytic activity">
    <reaction evidence="1">
        <text>L-glutamyl-tRNA(Gln) + L-glutamine + ATP + H2O = L-glutaminyl-tRNA(Gln) + L-glutamate + ADP + phosphate + H(+)</text>
        <dbReference type="Rhea" id="RHEA:17521"/>
        <dbReference type="Rhea" id="RHEA-COMP:9681"/>
        <dbReference type="Rhea" id="RHEA-COMP:9684"/>
        <dbReference type="ChEBI" id="CHEBI:15377"/>
        <dbReference type="ChEBI" id="CHEBI:15378"/>
        <dbReference type="ChEBI" id="CHEBI:29985"/>
        <dbReference type="ChEBI" id="CHEBI:30616"/>
        <dbReference type="ChEBI" id="CHEBI:43474"/>
        <dbReference type="ChEBI" id="CHEBI:58359"/>
        <dbReference type="ChEBI" id="CHEBI:78520"/>
        <dbReference type="ChEBI" id="CHEBI:78521"/>
        <dbReference type="ChEBI" id="CHEBI:456216"/>
    </reaction>
</comment>
<comment type="subunit">
    <text evidence="1">Subunit of the heterotrimeric GatCAB amidotransferase (AdT) complex, composed of A, B and C subunits.</text>
</comment>
<comment type="subcellular location">
    <subcellularLocation>
        <location evidence="1">Mitochondrion</location>
    </subcellularLocation>
    <subcellularLocation>
        <location evidence="1">Plastid</location>
        <location evidence="1">Chloroplast</location>
    </subcellularLocation>
</comment>
<comment type="miscellaneous">
    <text evidence="1">This protein may be expected to contain an N-terminal transit peptide but none has been predicted.</text>
</comment>
<comment type="similarity">
    <text evidence="1">Belongs to the GatC family.</text>
</comment>
<gene>
    <name evidence="1" type="primary">GATC</name>
</gene>